<sequence length="342" mass="36843">MVQNIAILGASGYTGAELVRLIATHPAMRIVALSGDRKAGMAMSEVFPFLRHLDLPRLQKIEEIDFSSVDLAFCALPHATSQAVIAGLPRDLKVVDLSADFRLRDPAAYETWYGKPHAAPELQKEAVYGLTEFYRDEIRGARLVAGTGCNAATGQYAIRPLIEAGVIDLDDILIDLKAGVSGAGRSLKENLLHAELSEGTHAYSAGGRHRHLGEFDQEFSKIAGRPVQVRFTPHLTPMNRGILANVYVKGDPQAVHRALTERYLTETFLEVLPFGALPSTRDIRGSNYVHIGVIGDRVPGCAMVVAVLDNLCKGSSGQAIQNANLMLGLDEAAGLGLAPVFP</sequence>
<protein>
    <recommendedName>
        <fullName evidence="1">N-acetyl-gamma-glutamyl-phosphate reductase</fullName>
        <shortName evidence="1">AGPR</shortName>
        <ecNumber evidence="1">1.2.1.38</ecNumber>
    </recommendedName>
    <alternativeName>
        <fullName evidence="1">N-acetyl-glutamate semialdehyde dehydrogenase</fullName>
        <shortName evidence="1">NAGSA dehydrogenase</shortName>
    </alternativeName>
</protein>
<proteinExistence type="inferred from homology"/>
<accession>Q3J277</accession>
<evidence type="ECO:0000255" key="1">
    <source>
        <dbReference type="HAMAP-Rule" id="MF_00150"/>
    </source>
</evidence>
<keyword id="KW-0028">Amino-acid biosynthesis</keyword>
<keyword id="KW-0055">Arginine biosynthesis</keyword>
<keyword id="KW-0963">Cytoplasm</keyword>
<keyword id="KW-0521">NADP</keyword>
<keyword id="KW-0560">Oxidoreductase</keyword>
<keyword id="KW-1185">Reference proteome</keyword>
<comment type="function">
    <text evidence="1">Catalyzes the NADPH-dependent reduction of N-acetyl-5-glutamyl phosphate to yield N-acetyl-L-glutamate 5-semialdehyde.</text>
</comment>
<comment type="catalytic activity">
    <reaction evidence="1">
        <text>N-acetyl-L-glutamate 5-semialdehyde + phosphate + NADP(+) = N-acetyl-L-glutamyl 5-phosphate + NADPH + H(+)</text>
        <dbReference type="Rhea" id="RHEA:21588"/>
        <dbReference type="ChEBI" id="CHEBI:15378"/>
        <dbReference type="ChEBI" id="CHEBI:29123"/>
        <dbReference type="ChEBI" id="CHEBI:43474"/>
        <dbReference type="ChEBI" id="CHEBI:57783"/>
        <dbReference type="ChEBI" id="CHEBI:57936"/>
        <dbReference type="ChEBI" id="CHEBI:58349"/>
        <dbReference type="EC" id="1.2.1.38"/>
    </reaction>
</comment>
<comment type="pathway">
    <text evidence="1">Amino-acid biosynthesis; L-arginine biosynthesis; N(2)-acetyl-L-ornithine from L-glutamate: step 3/4.</text>
</comment>
<comment type="subcellular location">
    <subcellularLocation>
        <location evidence="1">Cytoplasm</location>
    </subcellularLocation>
</comment>
<comment type="similarity">
    <text evidence="1">Belongs to the NAGSA dehydrogenase family. Type 1 subfamily.</text>
</comment>
<reference key="1">
    <citation type="submission" date="2005-09" db="EMBL/GenBank/DDBJ databases">
        <title>Complete sequence of chromosome 1 of Rhodobacter sphaeroides 2.4.1.</title>
        <authorList>
            <person name="Copeland A."/>
            <person name="Lucas S."/>
            <person name="Lapidus A."/>
            <person name="Barry K."/>
            <person name="Detter J.C."/>
            <person name="Glavina T."/>
            <person name="Hammon N."/>
            <person name="Israni S."/>
            <person name="Pitluck S."/>
            <person name="Richardson P."/>
            <person name="Mackenzie C."/>
            <person name="Choudhary M."/>
            <person name="Larimer F."/>
            <person name="Hauser L.J."/>
            <person name="Land M."/>
            <person name="Donohue T.J."/>
            <person name="Kaplan S."/>
        </authorList>
    </citation>
    <scope>NUCLEOTIDE SEQUENCE [LARGE SCALE GENOMIC DNA]</scope>
    <source>
        <strain>ATCC 17023 / DSM 158 / JCM 6121 / CCUG 31486 / LMG 2827 / NBRC 12203 / NCIMB 8253 / ATH 2.4.1.</strain>
    </source>
</reference>
<organism>
    <name type="scientific">Cereibacter sphaeroides (strain ATCC 17023 / DSM 158 / JCM 6121 / CCUG 31486 / LMG 2827 / NBRC 12203 / NCIMB 8253 / ATH 2.4.1.)</name>
    <name type="common">Rhodobacter sphaeroides</name>
    <dbReference type="NCBI Taxonomy" id="272943"/>
    <lineage>
        <taxon>Bacteria</taxon>
        <taxon>Pseudomonadati</taxon>
        <taxon>Pseudomonadota</taxon>
        <taxon>Alphaproteobacteria</taxon>
        <taxon>Rhodobacterales</taxon>
        <taxon>Paracoccaceae</taxon>
        <taxon>Cereibacter</taxon>
    </lineage>
</organism>
<name>ARGC_CERS4</name>
<feature type="chain" id="PRO_1000011050" description="N-acetyl-gamma-glutamyl-phosphate reductase">
    <location>
        <begin position="1"/>
        <end position="342"/>
    </location>
</feature>
<feature type="active site" evidence="1">
    <location>
        <position position="149"/>
    </location>
</feature>
<gene>
    <name evidence="1" type="primary">argC</name>
    <name type="ordered locus">RHOS4_15390</name>
    <name type="ORF">RSP_2946</name>
</gene>
<dbReference type="EC" id="1.2.1.38" evidence="1"/>
<dbReference type="EMBL" id="CP000143">
    <property type="protein sequence ID" value="ABA79107.1"/>
    <property type="molecule type" value="Genomic_DNA"/>
</dbReference>
<dbReference type="RefSeq" id="WP_011337869.1">
    <property type="nucleotide sequence ID" value="NC_007493.2"/>
</dbReference>
<dbReference type="RefSeq" id="YP_353008.1">
    <property type="nucleotide sequence ID" value="NC_007493.2"/>
</dbReference>
<dbReference type="SMR" id="Q3J277"/>
<dbReference type="STRING" id="272943.RSP_2946"/>
<dbReference type="EnsemblBacteria" id="ABA79107">
    <property type="protein sequence ID" value="ABA79107"/>
    <property type="gene ID" value="RSP_2946"/>
</dbReference>
<dbReference type="GeneID" id="3720687"/>
<dbReference type="KEGG" id="rsp:RSP_2946"/>
<dbReference type="PATRIC" id="fig|272943.9.peg.1884"/>
<dbReference type="eggNOG" id="COG0002">
    <property type="taxonomic scope" value="Bacteria"/>
</dbReference>
<dbReference type="OrthoDB" id="9801289at2"/>
<dbReference type="PhylomeDB" id="Q3J277"/>
<dbReference type="UniPathway" id="UPA00068">
    <property type="reaction ID" value="UER00108"/>
</dbReference>
<dbReference type="Proteomes" id="UP000002703">
    <property type="component" value="Chromosome 1"/>
</dbReference>
<dbReference type="GO" id="GO:0005737">
    <property type="term" value="C:cytoplasm"/>
    <property type="evidence" value="ECO:0007669"/>
    <property type="project" value="UniProtKB-SubCell"/>
</dbReference>
<dbReference type="GO" id="GO:0003942">
    <property type="term" value="F:N-acetyl-gamma-glutamyl-phosphate reductase activity"/>
    <property type="evidence" value="ECO:0007669"/>
    <property type="project" value="UniProtKB-UniRule"/>
</dbReference>
<dbReference type="GO" id="GO:0051287">
    <property type="term" value="F:NAD binding"/>
    <property type="evidence" value="ECO:0007669"/>
    <property type="project" value="InterPro"/>
</dbReference>
<dbReference type="GO" id="GO:0070401">
    <property type="term" value="F:NADP+ binding"/>
    <property type="evidence" value="ECO:0007669"/>
    <property type="project" value="InterPro"/>
</dbReference>
<dbReference type="GO" id="GO:0006526">
    <property type="term" value="P:L-arginine biosynthetic process"/>
    <property type="evidence" value="ECO:0007669"/>
    <property type="project" value="UniProtKB-UniRule"/>
</dbReference>
<dbReference type="CDD" id="cd23934">
    <property type="entry name" value="AGPR_1_C"/>
    <property type="match status" value="1"/>
</dbReference>
<dbReference type="CDD" id="cd17895">
    <property type="entry name" value="AGPR_1_N"/>
    <property type="match status" value="1"/>
</dbReference>
<dbReference type="Gene3D" id="3.30.360.10">
    <property type="entry name" value="Dihydrodipicolinate Reductase, domain 2"/>
    <property type="match status" value="1"/>
</dbReference>
<dbReference type="Gene3D" id="3.40.50.720">
    <property type="entry name" value="NAD(P)-binding Rossmann-like Domain"/>
    <property type="match status" value="1"/>
</dbReference>
<dbReference type="HAMAP" id="MF_00150">
    <property type="entry name" value="ArgC_type1"/>
    <property type="match status" value="1"/>
</dbReference>
<dbReference type="InterPro" id="IPR000706">
    <property type="entry name" value="AGPR_type-1"/>
</dbReference>
<dbReference type="InterPro" id="IPR036291">
    <property type="entry name" value="NAD(P)-bd_dom_sf"/>
</dbReference>
<dbReference type="InterPro" id="IPR050085">
    <property type="entry name" value="NAGSA_dehydrogenase"/>
</dbReference>
<dbReference type="InterPro" id="IPR000534">
    <property type="entry name" value="Semialdehyde_DH_NAD-bd"/>
</dbReference>
<dbReference type="NCBIfam" id="TIGR01850">
    <property type="entry name" value="argC"/>
    <property type="match status" value="1"/>
</dbReference>
<dbReference type="PANTHER" id="PTHR32338:SF10">
    <property type="entry name" value="N-ACETYL-GAMMA-GLUTAMYL-PHOSPHATE REDUCTASE, CHLOROPLASTIC-RELATED"/>
    <property type="match status" value="1"/>
</dbReference>
<dbReference type="PANTHER" id="PTHR32338">
    <property type="entry name" value="N-ACETYL-GAMMA-GLUTAMYL-PHOSPHATE REDUCTASE, CHLOROPLASTIC-RELATED-RELATED"/>
    <property type="match status" value="1"/>
</dbReference>
<dbReference type="Pfam" id="PF01118">
    <property type="entry name" value="Semialdhyde_dh"/>
    <property type="match status" value="1"/>
</dbReference>
<dbReference type="Pfam" id="PF22698">
    <property type="entry name" value="Semialdhyde_dhC_1"/>
    <property type="match status" value="1"/>
</dbReference>
<dbReference type="SMART" id="SM00859">
    <property type="entry name" value="Semialdhyde_dh"/>
    <property type="match status" value="1"/>
</dbReference>
<dbReference type="SUPFAM" id="SSF55347">
    <property type="entry name" value="Glyceraldehyde-3-phosphate dehydrogenase-like, C-terminal domain"/>
    <property type="match status" value="1"/>
</dbReference>
<dbReference type="SUPFAM" id="SSF51735">
    <property type="entry name" value="NAD(P)-binding Rossmann-fold domains"/>
    <property type="match status" value="1"/>
</dbReference>